<reference key="1">
    <citation type="journal article" date="1992" name="EMBO J.">
        <title>Heterodimerization between light-regulated and ubiquitously expressed Arabidopsis GBF bZIP proteins.</title>
        <authorList>
            <person name="Schindler U."/>
            <person name="Menkens A.E."/>
            <person name="Beckmann H."/>
            <person name="Ecker J.R."/>
            <person name="Cashmore A.R."/>
        </authorList>
    </citation>
    <scope>NUCLEOTIDE SEQUENCE [MRNA] (ISOFORM 1)</scope>
    <scope>FUNCTION</scope>
    <source>
        <strain>cv. Columbia</strain>
        <tissue>Leaf</tissue>
        <tissue>Stem</tissue>
    </source>
</reference>
<reference key="2">
    <citation type="online journal article" date="1996" name="Plant Gene Register">
        <title>Nucleotide sequence of the Arabidopsis thaliana gene encoding the G-box-binding factor 1 (GBF1).</title>
        <authorList>
            <person name="Terryn N."/>
            <person name="Villarroel R."/>
            <person name="Neyt P."/>
            <person name="de Clercq R."/>
            <person name="Ardiles W."/>
            <person name="de Keyser A."/>
            <person name="van den Daele H."/>
            <person name="Rouze P."/>
            <person name="Gielen J."/>
            <person name="van Montagu M."/>
        </authorList>
        <locator>PGR96-111</locator>
    </citation>
    <scope>NUCLEOTIDE SEQUENCE [GENOMIC DNA]</scope>
    <source>
        <strain>cv. Columbia</strain>
    </source>
</reference>
<reference key="3">
    <citation type="journal article" date="1998" name="Nature">
        <title>Analysis of 1.9 Mb of contiguous sequence from chromosome 4 of Arabidopsis thaliana.</title>
        <authorList>
            <person name="Bevan M."/>
            <person name="Bancroft I."/>
            <person name="Bent E."/>
            <person name="Love K."/>
            <person name="Goodman H.M."/>
            <person name="Dean C."/>
            <person name="Bergkamp R."/>
            <person name="Dirkse W."/>
            <person name="van Staveren M."/>
            <person name="Stiekema W."/>
            <person name="Drost L."/>
            <person name="Ridley P."/>
            <person name="Hudson S.-A."/>
            <person name="Patel K."/>
            <person name="Murphy G."/>
            <person name="Piffanelli P."/>
            <person name="Wedler H."/>
            <person name="Wedler E."/>
            <person name="Wambutt R."/>
            <person name="Weitzenegger T."/>
            <person name="Pohl T."/>
            <person name="Terryn N."/>
            <person name="Gielen J."/>
            <person name="Villarroel R."/>
            <person name="De Clercq R."/>
            <person name="van Montagu M."/>
            <person name="Lecharny A."/>
            <person name="Aubourg S."/>
            <person name="Gy I."/>
            <person name="Kreis M."/>
            <person name="Lao N."/>
            <person name="Kavanagh T."/>
            <person name="Hempel S."/>
            <person name="Kotter P."/>
            <person name="Entian K.-D."/>
            <person name="Rieger M."/>
            <person name="Schaefer M."/>
            <person name="Funk B."/>
            <person name="Mueller-Auer S."/>
            <person name="Silvey M."/>
            <person name="James R."/>
            <person name="Monfort A."/>
            <person name="Pons A."/>
            <person name="Puigdomenech P."/>
            <person name="Douka A."/>
            <person name="Voukelatou E."/>
            <person name="Milioni D."/>
            <person name="Hatzopoulos P."/>
            <person name="Piravandi E."/>
            <person name="Obermaier B."/>
            <person name="Hilbert H."/>
            <person name="Duesterhoeft A."/>
            <person name="Moores T."/>
            <person name="Jones J.D.G."/>
            <person name="Eneva T."/>
            <person name="Palme K."/>
            <person name="Benes V."/>
            <person name="Rechmann S."/>
            <person name="Ansorge W."/>
            <person name="Cooke R."/>
            <person name="Berger C."/>
            <person name="Delseny M."/>
            <person name="Voet M."/>
            <person name="Volckaert G."/>
            <person name="Mewes H.-W."/>
            <person name="Klosterman S."/>
            <person name="Schueller C."/>
            <person name="Chalwatzis N."/>
        </authorList>
    </citation>
    <scope>NUCLEOTIDE SEQUENCE [LARGE SCALE GENOMIC DNA]</scope>
    <source>
        <strain>cv. Columbia</strain>
    </source>
</reference>
<reference key="4">
    <citation type="journal article" date="1999" name="Nature">
        <title>Sequence and analysis of chromosome 4 of the plant Arabidopsis thaliana.</title>
        <authorList>
            <person name="Mayer K.F.X."/>
            <person name="Schueller C."/>
            <person name="Wambutt R."/>
            <person name="Murphy G."/>
            <person name="Volckaert G."/>
            <person name="Pohl T."/>
            <person name="Duesterhoeft A."/>
            <person name="Stiekema W."/>
            <person name="Entian K.-D."/>
            <person name="Terryn N."/>
            <person name="Harris B."/>
            <person name="Ansorge W."/>
            <person name="Brandt P."/>
            <person name="Grivell L.A."/>
            <person name="Rieger M."/>
            <person name="Weichselgartner M."/>
            <person name="de Simone V."/>
            <person name="Obermaier B."/>
            <person name="Mache R."/>
            <person name="Mueller M."/>
            <person name="Kreis M."/>
            <person name="Delseny M."/>
            <person name="Puigdomenech P."/>
            <person name="Watson M."/>
            <person name="Schmidtheini T."/>
            <person name="Reichert B."/>
            <person name="Portetelle D."/>
            <person name="Perez-Alonso M."/>
            <person name="Boutry M."/>
            <person name="Bancroft I."/>
            <person name="Vos P."/>
            <person name="Hoheisel J."/>
            <person name="Zimmermann W."/>
            <person name="Wedler H."/>
            <person name="Ridley P."/>
            <person name="Langham S.-A."/>
            <person name="McCullagh B."/>
            <person name="Bilham L."/>
            <person name="Robben J."/>
            <person name="van der Schueren J."/>
            <person name="Grymonprez B."/>
            <person name="Chuang Y.-J."/>
            <person name="Vandenbussche F."/>
            <person name="Braeken M."/>
            <person name="Weltjens I."/>
            <person name="Voet M."/>
            <person name="Bastiaens I."/>
            <person name="Aert R."/>
            <person name="Defoor E."/>
            <person name="Weitzenegger T."/>
            <person name="Bothe G."/>
            <person name="Ramsperger U."/>
            <person name="Hilbert H."/>
            <person name="Braun M."/>
            <person name="Holzer E."/>
            <person name="Brandt A."/>
            <person name="Peters S."/>
            <person name="van Staveren M."/>
            <person name="Dirkse W."/>
            <person name="Mooijman P."/>
            <person name="Klein Lankhorst R."/>
            <person name="Rose M."/>
            <person name="Hauf J."/>
            <person name="Koetter P."/>
            <person name="Berneiser S."/>
            <person name="Hempel S."/>
            <person name="Feldpausch M."/>
            <person name="Lamberth S."/>
            <person name="Van den Daele H."/>
            <person name="De Keyser A."/>
            <person name="Buysshaert C."/>
            <person name="Gielen J."/>
            <person name="Villarroel R."/>
            <person name="De Clercq R."/>
            <person name="van Montagu M."/>
            <person name="Rogers J."/>
            <person name="Cronin A."/>
            <person name="Quail M.A."/>
            <person name="Bray-Allen S."/>
            <person name="Clark L."/>
            <person name="Doggett J."/>
            <person name="Hall S."/>
            <person name="Kay M."/>
            <person name="Lennard N."/>
            <person name="McLay K."/>
            <person name="Mayes R."/>
            <person name="Pettett A."/>
            <person name="Rajandream M.A."/>
            <person name="Lyne M."/>
            <person name="Benes V."/>
            <person name="Rechmann S."/>
            <person name="Borkova D."/>
            <person name="Bloecker H."/>
            <person name="Scharfe M."/>
            <person name="Grimm M."/>
            <person name="Loehnert T.-H."/>
            <person name="Dose S."/>
            <person name="de Haan M."/>
            <person name="Maarse A.C."/>
            <person name="Schaefer M."/>
            <person name="Mueller-Auer S."/>
            <person name="Gabel C."/>
            <person name="Fuchs M."/>
            <person name="Fartmann B."/>
            <person name="Granderath K."/>
            <person name="Dauner D."/>
            <person name="Herzl A."/>
            <person name="Neumann S."/>
            <person name="Argiriou A."/>
            <person name="Vitale D."/>
            <person name="Liguori R."/>
            <person name="Piravandi E."/>
            <person name="Massenet O."/>
            <person name="Quigley F."/>
            <person name="Clabauld G."/>
            <person name="Muendlein A."/>
            <person name="Felber R."/>
            <person name="Schnabl S."/>
            <person name="Hiller R."/>
            <person name="Schmidt W."/>
            <person name="Lecharny A."/>
            <person name="Aubourg S."/>
            <person name="Chefdor F."/>
            <person name="Cooke R."/>
            <person name="Berger C."/>
            <person name="Monfort A."/>
            <person name="Casacuberta E."/>
            <person name="Gibbons T."/>
            <person name="Weber N."/>
            <person name="Vandenbol M."/>
            <person name="Bargues M."/>
            <person name="Terol J."/>
            <person name="Torres A."/>
            <person name="Perez-Perez A."/>
            <person name="Purnelle B."/>
            <person name="Bent E."/>
            <person name="Johnson S."/>
            <person name="Tacon D."/>
            <person name="Jesse T."/>
            <person name="Heijnen L."/>
            <person name="Schwarz S."/>
            <person name="Scholler P."/>
            <person name="Heber S."/>
            <person name="Francs P."/>
            <person name="Bielke C."/>
            <person name="Frishman D."/>
            <person name="Haase D."/>
            <person name="Lemcke K."/>
            <person name="Mewes H.-W."/>
            <person name="Stocker S."/>
            <person name="Zaccaria P."/>
            <person name="Bevan M."/>
            <person name="Wilson R.K."/>
            <person name="de la Bastide M."/>
            <person name="Habermann K."/>
            <person name="Parnell L."/>
            <person name="Dedhia N."/>
            <person name="Gnoj L."/>
            <person name="Schutz K."/>
            <person name="Huang E."/>
            <person name="Spiegel L."/>
            <person name="Sekhon M."/>
            <person name="Murray J."/>
            <person name="Sheet P."/>
            <person name="Cordes M."/>
            <person name="Abu-Threideh J."/>
            <person name="Stoneking T."/>
            <person name="Kalicki J."/>
            <person name="Graves T."/>
            <person name="Harmon G."/>
            <person name="Edwards J."/>
            <person name="Latreille P."/>
            <person name="Courtney L."/>
            <person name="Cloud J."/>
            <person name="Abbott A."/>
            <person name="Scott K."/>
            <person name="Johnson D."/>
            <person name="Minx P."/>
            <person name="Bentley D."/>
            <person name="Fulton B."/>
            <person name="Miller N."/>
            <person name="Greco T."/>
            <person name="Kemp K."/>
            <person name="Kramer J."/>
            <person name="Fulton L."/>
            <person name="Mardis E."/>
            <person name="Dante M."/>
            <person name="Pepin K."/>
            <person name="Hillier L.W."/>
            <person name="Nelson J."/>
            <person name="Spieth J."/>
            <person name="Ryan E."/>
            <person name="Andrews S."/>
            <person name="Geisel C."/>
            <person name="Layman D."/>
            <person name="Du H."/>
            <person name="Ali J."/>
            <person name="Berghoff A."/>
            <person name="Jones K."/>
            <person name="Drone K."/>
            <person name="Cotton M."/>
            <person name="Joshu C."/>
            <person name="Antonoiu B."/>
            <person name="Zidanic M."/>
            <person name="Strong C."/>
            <person name="Sun H."/>
            <person name="Lamar B."/>
            <person name="Yordan C."/>
            <person name="Ma P."/>
            <person name="Zhong J."/>
            <person name="Preston R."/>
            <person name="Vil D."/>
            <person name="Shekher M."/>
            <person name="Matero A."/>
            <person name="Shah R."/>
            <person name="Swaby I.K."/>
            <person name="O'Shaughnessy A."/>
            <person name="Rodriguez M."/>
            <person name="Hoffman J."/>
            <person name="Till S."/>
            <person name="Granat S."/>
            <person name="Shohdy N."/>
            <person name="Hasegawa A."/>
            <person name="Hameed A."/>
            <person name="Lodhi M."/>
            <person name="Johnson A."/>
            <person name="Chen E."/>
            <person name="Marra M.A."/>
            <person name="Martienssen R."/>
            <person name="McCombie W.R."/>
        </authorList>
    </citation>
    <scope>NUCLEOTIDE SEQUENCE [LARGE SCALE GENOMIC DNA]</scope>
    <source>
        <strain>cv. Columbia</strain>
    </source>
</reference>
<reference key="5">
    <citation type="journal article" date="2017" name="Plant J.">
        <title>Araport11: a complete reannotation of the Arabidopsis thaliana reference genome.</title>
        <authorList>
            <person name="Cheng C.Y."/>
            <person name="Krishnakumar V."/>
            <person name="Chan A.P."/>
            <person name="Thibaud-Nissen F."/>
            <person name="Schobel S."/>
            <person name="Town C.D."/>
        </authorList>
    </citation>
    <scope>GENOME REANNOTATION</scope>
    <source>
        <strain>cv. Columbia</strain>
    </source>
</reference>
<reference key="6">
    <citation type="journal article" date="2003" name="Science">
        <title>Empirical analysis of transcriptional activity in the Arabidopsis genome.</title>
        <authorList>
            <person name="Yamada K."/>
            <person name="Lim J."/>
            <person name="Dale J.M."/>
            <person name="Chen H."/>
            <person name="Shinn P."/>
            <person name="Palm C.J."/>
            <person name="Southwick A.M."/>
            <person name="Wu H.C."/>
            <person name="Kim C.J."/>
            <person name="Nguyen M."/>
            <person name="Pham P.K."/>
            <person name="Cheuk R.F."/>
            <person name="Karlin-Newmann G."/>
            <person name="Liu S.X."/>
            <person name="Lam B."/>
            <person name="Sakano H."/>
            <person name="Wu T."/>
            <person name="Yu G."/>
            <person name="Miranda M."/>
            <person name="Quach H.L."/>
            <person name="Tripp M."/>
            <person name="Chang C.H."/>
            <person name="Lee J.M."/>
            <person name="Toriumi M.J."/>
            <person name="Chan M.M."/>
            <person name="Tang C.C."/>
            <person name="Onodera C.S."/>
            <person name="Deng J.M."/>
            <person name="Akiyama K."/>
            <person name="Ansari Y."/>
            <person name="Arakawa T."/>
            <person name="Banh J."/>
            <person name="Banno F."/>
            <person name="Bowser L."/>
            <person name="Brooks S.Y."/>
            <person name="Carninci P."/>
            <person name="Chao Q."/>
            <person name="Choy N."/>
            <person name="Enju A."/>
            <person name="Goldsmith A.D."/>
            <person name="Gurjal M."/>
            <person name="Hansen N.F."/>
            <person name="Hayashizaki Y."/>
            <person name="Johnson-Hopson C."/>
            <person name="Hsuan V.W."/>
            <person name="Iida K."/>
            <person name="Karnes M."/>
            <person name="Khan S."/>
            <person name="Koesema E."/>
            <person name="Ishida J."/>
            <person name="Jiang P.X."/>
            <person name="Jones T."/>
            <person name="Kawai J."/>
            <person name="Kamiya A."/>
            <person name="Meyers C."/>
            <person name="Nakajima M."/>
            <person name="Narusaka M."/>
            <person name="Seki M."/>
            <person name="Sakurai T."/>
            <person name="Satou M."/>
            <person name="Tamse R."/>
            <person name="Vaysberg M."/>
            <person name="Wallender E.K."/>
            <person name="Wong C."/>
            <person name="Yamamura Y."/>
            <person name="Yuan S."/>
            <person name="Shinozaki K."/>
            <person name="Davis R.W."/>
            <person name="Theologis A."/>
            <person name="Ecker J.R."/>
        </authorList>
    </citation>
    <scope>NUCLEOTIDE SEQUENCE [LARGE SCALE MRNA] (ISOFORMS 1 AND 2)</scope>
    <source>
        <strain>cv. Columbia</strain>
    </source>
</reference>
<reference key="7">
    <citation type="journal article" date="1995" name="Plant Cell">
        <title>Reconstitution of Arabidopsis casein kinase II from recombinant subunits and phosphorylation of transcription factor GBF1.</title>
        <authorList>
            <person name="Klimczak L.J."/>
            <person name="Collinge M.A."/>
            <person name="Farini D."/>
            <person name="Giuliano G."/>
            <person name="Walker J.C."/>
            <person name="Cashmore A.R."/>
        </authorList>
    </citation>
    <scope>PHOSPHORYLATION</scope>
</reference>
<reference key="8">
    <citation type="journal article" date="2002" name="Trends Plant Sci.">
        <title>bZIP transcription factors in Arabidopsis.</title>
        <authorList>
            <person name="Jakoby M."/>
            <person name="Weisshaar B."/>
            <person name="Droege-Laser W."/>
            <person name="Vicente-Carbajosa J."/>
            <person name="Tiedemann J."/>
            <person name="Kroj T."/>
            <person name="Parcy F."/>
        </authorList>
    </citation>
    <scope>GENE FAMILY</scope>
    <scope>NOMENCLATURE</scope>
</reference>
<reference key="9">
    <citation type="journal article" date="2008" name="BMB Rep.">
        <title>AtbZIP16 and AtbZIP68, two new members of GBFs, can interact with other G group bZIPs in Arabidopsis thaliana.</title>
        <authorList>
            <person name="Shen H."/>
            <person name="Cao K."/>
            <person name="Wang X."/>
        </authorList>
    </citation>
    <scope>SUBUNIT</scope>
    <scope>INTERACTION WITH BZIP16 AND BZIP68</scope>
</reference>
<reference key="10">
    <citation type="journal article" date="2012" name="J. Biol. Chem.">
        <title>Redox-mediated mechanisms regulate DNA binding activity of the G-group of basic region leucine zipper (bZIP) transcription factors in Arabidopsis.</title>
        <authorList>
            <person name="Shaikhali J."/>
            <person name="Noren L."/>
            <person name="de Dios Barajas-Lopez J."/>
            <person name="Srivastava V."/>
            <person name="Koenig J."/>
            <person name="Sauer U.H."/>
            <person name="Wingsle G."/>
            <person name="Dietz K.J."/>
            <person name="Strand A."/>
        </authorList>
    </citation>
    <scope>FUNCTION</scope>
    <scope>DISULFIDE BOND</scope>
    <scope>MUTAGENESIS OF CYS-247 AND CYS-275</scope>
</reference>
<reference key="11">
    <citation type="journal article" date="2015" name="Protoplasma">
        <title>GIP1 protein is a novel cofactor that regulates DNA-binding affinity of redox-regulated members of bZIP transcription factors involved in the early stages of Arabidopsis development.</title>
        <authorList>
            <person name="Shaikhali J."/>
        </authorList>
    </citation>
    <scope>INTERACTION WITH GIP1</scope>
</reference>
<gene>
    <name type="primary">GBF1</name>
    <name type="synonym">BZIP41</name>
    <name type="ordered locus">At4g36730</name>
    <name type="ORF">C7A10_630</name>
</gene>
<protein>
    <recommendedName>
        <fullName>G-box-binding factor 1</fullName>
        <shortName>AtGBF1</shortName>
    </recommendedName>
    <alternativeName>
        <fullName>bZIP transcription factor 41</fullName>
        <shortName>AtbZIP41</shortName>
    </alternativeName>
</protein>
<accession>P42774</accession>
<accession>Q940I9</accession>
<accession>Q944J1</accession>
<accession>Q96263</accession>
<organism>
    <name type="scientific">Arabidopsis thaliana</name>
    <name type="common">Mouse-ear cress</name>
    <dbReference type="NCBI Taxonomy" id="3702"/>
    <lineage>
        <taxon>Eukaryota</taxon>
        <taxon>Viridiplantae</taxon>
        <taxon>Streptophyta</taxon>
        <taxon>Embryophyta</taxon>
        <taxon>Tracheophyta</taxon>
        <taxon>Spermatophyta</taxon>
        <taxon>Magnoliopsida</taxon>
        <taxon>eudicotyledons</taxon>
        <taxon>Gunneridae</taxon>
        <taxon>Pentapetalae</taxon>
        <taxon>rosids</taxon>
        <taxon>malvids</taxon>
        <taxon>Brassicales</taxon>
        <taxon>Brassicaceae</taxon>
        <taxon>Camelineae</taxon>
        <taxon>Arabidopsis</taxon>
    </lineage>
</organism>
<dbReference type="EMBL" id="X63894">
    <property type="protein sequence ID" value="CAA45356.1"/>
    <property type="molecule type" value="mRNA"/>
</dbReference>
<dbReference type="EMBL" id="X99941">
    <property type="protein sequence ID" value="CAA68197.1"/>
    <property type="molecule type" value="Genomic_DNA"/>
</dbReference>
<dbReference type="EMBL" id="Z99708">
    <property type="protein sequence ID" value="CAB16806.1"/>
    <property type="molecule type" value="Genomic_DNA"/>
</dbReference>
<dbReference type="EMBL" id="AL161589">
    <property type="protein sequence ID" value="CAB80339.1"/>
    <property type="molecule type" value="Genomic_DNA"/>
</dbReference>
<dbReference type="EMBL" id="CP002687">
    <property type="protein sequence ID" value="AEE86694.1"/>
    <property type="molecule type" value="Genomic_DNA"/>
</dbReference>
<dbReference type="EMBL" id="CP002687">
    <property type="protein sequence ID" value="AEE86695.1"/>
    <property type="molecule type" value="Genomic_DNA"/>
</dbReference>
<dbReference type="EMBL" id="AY054574">
    <property type="protein sequence ID" value="AAK96765.1"/>
    <property type="molecule type" value="mRNA"/>
</dbReference>
<dbReference type="EMBL" id="AY064670">
    <property type="protein sequence ID" value="AAL47377.1"/>
    <property type="molecule type" value="mRNA"/>
</dbReference>
<dbReference type="EMBL" id="AF428382">
    <property type="protein sequence ID" value="AAL16150.1"/>
    <property type="molecule type" value="mRNA"/>
</dbReference>
<dbReference type="PIR" id="G85433">
    <property type="entry name" value="G85433"/>
</dbReference>
<dbReference type="PIR" id="S20883">
    <property type="entry name" value="S20883"/>
</dbReference>
<dbReference type="RefSeq" id="NP_195391.1">
    <molecule id="P42774-1"/>
    <property type="nucleotide sequence ID" value="NM_119837.4"/>
</dbReference>
<dbReference type="RefSeq" id="NP_849510.1">
    <molecule id="P42774-2"/>
    <property type="nucleotide sequence ID" value="NM_179179.3"/>
</dbReference>
<dbReference type="SMR" id="P42774"/>
<dbReference type="BioGRID" id="15107">
    <property type="interactions" value="10"/>
</dbReference>
<dbReference type="FunCoup" id="P42774">
    <property type="interactions" value="162"/>
</dbReference>
<dbReference type="IntAct" id="P42774">
    <property type="interactions" value="6"/>
</dbReference>
<dbReference type="STRING" id="3702.P42774"/>
<dbReference type="PaxDb" id="3702-AT4G36730.1"/>
<dbReference type="ProteomicsDB" id="222178">
    <molecule id="P42774-1"/>
</dbReference>
<dbReference type="EnsemblPlants" id="AT4G36730.1">
    <molecule id="P42774-1"/>
    <property type="protein sequence ID" value="AT4G36730.1"/>
    <property type="gene ID" value="AT4G36730"/>
</dbReference>
<dbReference type="EnsemblPlants" id="AT4G36730.2">
    <molecule id="P42774-2"/>
    <property type="protein sequence ID" value="AT4G36730.2"/>
    <property type="gene ID" value="AT4G36730"/>
</dbReference>
<dbReference type="GeneID" id="829826"/>
<dbReference type="Gramene" id="AT4G36730.1">
    <molecule id="P42774-1"/>
    <property type="protein sequence ID" value="AT4G36730.1"/>
    <property type="gene ID" value="AT4G36730"/>
</dbReference>
<dbReference type="Gramene" id="AT4G36730.2">
    <molecule id="P42774-2"/>
    <property type="protein sequence ID" value="AT4G36730.2"/>
    <property type="gene ID" value="AT4G36730"/>
</dbReference>
<dbReference type="KEGG" id="ath:AT4G36730"/>
<dbReference type="Araport" id="AT4G36730"/>
<dbReference type="TAIR" id="AT4G36730">
    <property type="gene designation" value="GBF1"/>
</dbReference>
<dbReference type="eggNOG" id="ENOG502QVYY">
    <property type="taxonomic scope" value="Eukaryota"/>
</dbReference>
<dbReference type="InParanoid" id="P42774"/>
<dbReference type="OMA" id="GVMPDQW"/>
<dbReference type="PhylomeDB" id="P42774"/>
<dbReference type="PRO" id="PR:P42774"/>
<dbReference type="Proteomes" id="UP000006548">
    <property type="component" value="Chromosome 4"/>
</dbReference>
<dbReference type="ExpressionAtlas" id="P42774">
    <property type="expression patterns" value="baseline and differential"/>
</dbReference>
<dbReference type="GO" id="GO:0005737">
    <property type="term" value="C:cytoplasm"/>
    <property type="evidence" value="ECO:0000314"/>
    <property type="project" value="TAIR"/>
</dbReference>
<dbReference type="GO" id="GO:0005634">
    <property type="term" value="C:nucleus"/>
    <property type="evidence" value="ECO:0007669"/>
    <property type="project" value="UniProtKB-SubCell"/>
</dbReference>
<dbReference type="GO" id="GO:0003700">
    <property type="term" value="F:DNA-binding transcription factor activity"/>
    <property type="evidence" value="ECO:0000250"/>
    <property type="project" value="TAIR"/>
</dbReference>
<dbReference type="GO" id="GO:0043565">
    <property type="term" value="F:sequence-specific DNA binding"/>
    <property type="evidence" value="ECO:0000314"/>
    <property type="project" value="TAIR"/>
</dbReference>
<dbReference type="GO" id="GO:0000976">
    <property type="term" value="F:transcription cis-regulatory region binding"/>
    <property type="evidence" value="ECO:0000353"/>
    <property type="project" value="TAIR"/>
</dbReference>
<dbReference type="CDD" id="cd14702">
    <property type="entry name" value="bZIP_plant_GBF1"/>
    <property type="match status" value="1"/>
</dbReference>
<dbReference type="FunFam" id="1.20.5.170:FF:000063">
    <property type="entry name" value="G-box binding factor 3"/>
    <property type="match status" value="1"/>
</dbReference>
<dbReference type="Gene3D" id="1.20.5.170">
    <property type="match status" value="1"/>
</dbReference>
<dbReference type="InterPro" id="IPR004827">
    <property type="entry name" value="bZIP"/>
</dbReference>
<dbReference type="InterPro" id="IPR045314">
    <property type="entry name" value="bZIP_plant_GBF1"/>
</dbReference>
<dbReference type="InterPro" id="IPR046347">
    <property type="entry name" value="bZIP_sf"/>
</dbReference>
<dbReference type="InterPro" id="IPR044827">
    <property type="entry name" value="GBF-like"/>
</dbReference>
<dbReference type="InterPro" id="IPR012900">
    <property type="entry name" value="MFMR"/>
</dbReference>
<dbReference type="PANTHER" id="PTHR45967:SF20">
    <property type="entry name" value="G-BOX-BINDING FACTOR 1"/>
    <property type="match status" value="1"/>
</dbReference>
<dbReference type="PANTHER" id="PTHR45967">
    <property type="entry name" value="G-BOX-BINDING FACTOR 3-RELATED"/>
    <property type="match status" value="1"/>
</dbReference>
<dbReference type="Pfam" id="PF00170">
    <property type="entry name" value="bZIP_1"/>
    <property type="match status" value="1"/>
</dbReference>
<dbReference type="Pfam" id="PF07777">
    <property type="entry name" value="MFMR"/>
    <property type="match status" value="1"/>
</dbReference>
<dbReference type="SMART" id="SM00338">
    <property type="entry name" value="BRLZ"/>
    <property type="match status" value="1"/>
</dbReference>
<dbReference type="SUPFAM" id="SSF57959">
    <property type="entry name" value="Leucine zipper domain"/>
    <property type="match status" value="1"/>
</dbReference>
<dbReference type="PROSITE" id="PS50217">
    <property type="entry name" value="BZIP"/>
    <property type="match status" value="1"/>
</dbReference>
<dbReference type="PROSITE" id="PS00036">
    <property type="entry name" value="BZIP_BASIC"/>
    <property type="match status" value="1"/>
</dbReference>
<comment type="function">
    <text evidence="3 5">Binds to the G-box motif (5'-CCACGTGG-3') of the rbcS-1A gene promoter (PubMed:1373374). G-box and G-box-like motifs are cis-acting elements defined in promoters of certain plant genes which are regulated by such diverse stimuli as light-induction or hormone control. Binds to the G-box motif 5'-CACGTG-3' of LHCB2.4 (At3g27690) promoter. May act as transcriptional activator in light-regulated expression of LHCB2.4. Probably binds DNA as monomer. DNA-binding activity is redox-dependent (PubMed:22718771).</text>
</comment>
<comment type="subunit">
    <text evidence="4 6">Monomer and heterodimers with BZIP16 and BZIP68 (PubMed:18315949). Interacts with GIP1 (PubMed:25387999).</text>
</comment>
<comment type="subcellular location">
    <subcellularLocation>
        <location>Nucleus</location>
    </subcellularLocation>
</comment>
<comment type="alternative products">
    <event type="alternative splicing"/>
    <isoform>
        <id>P42774-1</id>
        <name>1</name>
        <sequence type="displayed"/>
    </isoform>
    <isoform>
        <id>P42774-2</id>
        <name>2</name>
        <sequence type="described" ref="VSP_009191"/>
    </isoform>
</comment>
<comment type="tissue specificity">
    <text>Found in both light and dark grown leaves.</text>
</comment>
<comment type="PTM">
    <text evidence="7">Phosphorylated by CK2.</text>
</comment>
<comment type="similarity">
    <text evidence="9">Belongs to the bZIP family.</text>
</comment>
<proteinExistence type="evidence at protein level"/>
<sequence length="315" mass="33932">MGTSEDKMPFKTTKPTSSAQEVPPTPYPDWQNSMQAYYGGGGTPNPFFPSPVGSPSPHPYMWGAQHHMMPPYGTPVPYPAMYPPGAVYAHPSMPMPPNSGPTNKEPAKDQASGKKSKGNSKKKAEGGDKALSGSGNDGASHSDESVTAGSSDENDENANQQEQGSIRKPSFGQMLADASSQSTTGEIQGSVPMKPVAPGTNLNIGMDLWSSQAGVPVKDERELKRQKRKQSNRESARRSRLRKQAECEQLQQRVESLSNENQSLRDELQRLSSECDKLKSENNSIQDELQRVLGAEAVANLEQNAAGSKDGEGTN</sequence>
<keyword id="KW-0025">Alternative splicing</keyword>
<keyword id="KW-1015">Disulfide bond</keyword>
<keyword id="KW-0238">DNA-binding</keyword>
<keyword id="KW-0539">Nucleus</keyword>
<keyword id="KW-0597">Phosphoprotein</keyword>
<keyword id="KW-1185">Reference proteome</keyword>
<keyword id="KW-0804">Transcription</keyword>
<keyword id="KW-0805">Transcription regulation</keyword>
<name>GBF1_ARATH</name>
<feature type="chain" id="PRO_0000076565" description="G-box-binding factor 1">
    <location>
        <begin position="1"/>
        <end position="315"/>
    </location>
</feature>
<feature type="domain" description="bZIP" evidence="1">
    <location>
        <begin position="222"/>
        <end position="285"/>
    </location>
</feature>
<feature type="region of interest" description="Disordered" evidence="2">
    <location>
        <begin position="1"/>
        <end position="56"/>
    </location>
</feature>
<feature type="region of interest" description="Disordered" evidence="2">
    <location>
        <begin position="93"/>
        <end position="268"/>
    </location>
</feature>
<feature type="region of interest" description="Basic motif" evidence="1">
    <location>
        <begin position="224"/>
        <end position="243"/>
    </location>
</feature>
<feature type="region of interest" description="Leucine-zipper" evidence="1">
    <location>
        <begin position="250"/>
        <end position="285"/>
    </location>
</feature>
<feature type="compositionally biased region" description="Pro residues" evidence="2">
    <location>
        <begin position="46"/>
        <end position="56"/>
    </location>
</feature>
<feature type="compositionally biased region" description="Polar residues" evidence="2">
    <location>
        <begin position="133"/>
        <end position="164"/>
    </location>
</feature>
<feature type="compositionally biased region" description="Polar residues" evidence="2">
    <location>
        <begin position="178"/>
        <end position="187"/>
    </location>
</feature>
<feature type="compositionally biased region" description="Polar residues" evidence="2">
    <location>
        <begin position="249"/>
        <end position="262"/>
    </location>
</feature>
<feature type="disulfide bond" description="Interchain" evidence="10">
    <location>
        <position position="247"/>
    </location>
</feature>
<feature type="splice variant" id="VSP_009191" description="In isoform 2." evidence="8">
    <location>
        <begin position="161"/>
        <end position="162"/>
    </location>
</feature>
<feature type="mutagenesis site" description="Significantly increases DNA binding activity." evidence="5">
    <original>C</original>
    <variation>L</variation>
    <location>
        <position position="247"/>
    </location>
</feature>
<feature type="mutagenesis site" description="Slightly increases DNA binding activity." evidence="5">
    <original>C</original>
    <variation>L</variation>
    <location>
        <position position="275"/>
    </location>
</feature>
<feature type="sequence conflict" description="In Ref. 1; CAA45356." evidence="9" ref="1">
    <original>T</original>
    <variation>S</variation>
    <location>
        <position position="43"/>
    </location>
</feature>
<feature type="sequence conflict" description="In Ref. 6; AAK96765/AAL47377." evidence="9" ref="6">
    <original>S</original>
    <variation>A</variation>
    <location>
        <position position="120"/>
    </location>
</feature>
<feature type="sequence conflict" description="In Ref. 6; AAK96765/AAL47377." evidence="9" ref="6">
    <original>Q</original>
    <variation>R</variation>
    <location>
        <position position="249"/>
    </location>
</feature>
<evidence type="ECO:0000255" key="1">
    <source>
        <dbReference type="PROSITE-ProRule" id="PRU00978"/>
    </source>
</evidence>
<evidence type="ECO:0000256" key="2">
    <source>
        <dbReference type="SAM" id="MobiDB-lite"/>
    </source>
</evidence>
<evidence type="ECO:0000269" key="3">
    <source>
    </source>
</evidence>
<evidence type="ECO:0000269" key="4">
    <source>
    </source>
</evidence>
<evidence type="ECO:0000269" key="5">
    <source>
    </source>
</evidence>
<evidence type="ECO:0000269" key="6">
    <source>
    </source>
</evidence>
<evidence type="ECO:0000269" key="7">
    <source>
    </source>
</evidence>
<evidence type="ECO:0000303" key="8">
    <source>
    </source>
</evidence>
<evidence type="ECO:0000305" key="9"/>
<evidence type="ECO:0000305" key="10">
    <source>
    </source>
</evidence>